<proteinExistence type="uncertain"/>
<organism>
    <name type="scientific">Schizosaccharomyces pombe (strain 972 / ATCC 24843)</name>
    <name type="common">Fission yeast</name>
    <dbReference type="NCBI Taxonomy" id="284812"/>
    <lineage>
        <taxon>Eukaryota</taxon>
        <taxon>Fungi</taxon>
        <taxon>Dikarya</taxon>
        <taxon>Ascomycota</taxon>
        <taxon>Taphrinomycotina</taxon>
        <taxon>Schizosaccharomycetes</taxon>
        <taxon>Schizosaccharomycetales</taxon>
        <taxon>Schizosaccharomycetaceae</taxon>
        <taxon>Schizosaccharomyces</taxon>
    </lineage>
</organism>
<reference key="1">
    <citation type="journal article" date="2004" name="Nucleic Acids Res.">
        <title>The major role of human AP-endonuclease homolog Apn2 in repair of abasic sites in Schizosaccharomyces pombe.</title>
        <authorList>
            <person name="Ribar B."/>
            <person name="Izumi T."/>
            <person name="Mitra S."/>
        </authorList>
    </citation>
    <scope>NUCLEOTIDE SEQUENCE [MRNA]</scope>
    <scope>FUNCTION</scope>
</reference>
<reference key="2">
    <citation type="journal article" date="2002" name="Nature">
        <title>The genome sequence of Schizosaccharomyces pombe.</title>
        <authorList>
            <person name="Wood V."/>
            <person name="Gwilliam R."/>
            <person name="Rajandream M.A."/>
            <person name="Lyne M.H."/>
            <person name="Lyne R."/>
            <person name="Stewart A."/>
            <person name="Sgouros J.G."/>
            <person name="Peat N."/>
            <person name="Hayles J."/>
            <person name="Baker S.G."/>
            <person name="Basham D."/>
            <person name="Bowman S."/>
            <person name="Brooks K."/>
            <person name="Brown D."/>
            <person name="Brown S."/>
            <person name="Chillingworth T."/>
            <person name="Churcher C.M."/>
            <person name="Collins M."/>
            <person name="Connor R."/>
            <person name="Cronin A."/>
            <person name="Davis P."/>
            <person name="Feltwell T."/>
            <person name="Fraser A."/>
            <person name="Gentles S."/>
            <person name="Goble A."/>
            <person name="Hamlin N."/>
            <person name="Harris D.E."/>
            <person name="Hidalgo J."/>
            <person name="Hodgson G."/>
            <person name="Holroyd S."/>
            <person name="Hornsby T."/>
            <person name="Howarth S."/>
            <person name="Huckle E.J."/>
            <person name="Hunt S."/>
            <person name="Jagels K."/>
            <person name="James K.D."/>
            <person name="Jones L."/>
            <person name="Jones M."/>
            <person name="Leather S."/>
            <person name="McDonald S."/>
            <person name="McLean J."/>
            <person name="Mooney P."/>
            <person name="Moule S."/>
            <person name="Mungall K.L."/>
            <person name="Murphy L.D."/>
            <person name="Niblett D."/>
            <person name="Odell C."/>
            <person name="Oliver K."/>
            <person name="O'Neil S."/>
            <person name="Pearson D."/>
            <person name="Quail M.A."/>
            <person name="Rabbinowitsch E."/>
            <person name="Rutherford K.M."/>
            <person name="Rutter S."/>
            <person name="Saunders D."/>
            <person name="Seeger K."/>
            <person name="Sharp S."/>
            <person name="Skelton J."/>
            <person name="Simmonds M.N."/>
            <person name="Squares R."/>
            <person name="Squares S."/>
            <person name="Stevens K."/>
            <person name="Taylor K."/>
            <person name="Taylor R.G."/>
            <person name="Tivey A."/>
            <person name="Walsh S.V."/>
            <person name="Warren T."/>
            <person name="Whitehead S."/>
            <person name="Woodward J.R."/>
            <person name="Volckaert G."/>
            <person name="Aert R."/>
            <person name="Robben J."/>
            <person name="Grymonprez B."/>
            <person name="Weltjens I."/>
            <person name="Vanstreels E."/>
            <person name="Rieger M."/>
            <person name="Schaefer M."/>
            <person name="Mueller-Auer S."/>
            <person name="Gabel C."/>
            <person name="Fuchs M."/>
            <person name="Duesterhoeft A."/>
            <person name="Fritzc C."/>
            <person name="Holzer E."/>
            <person name="Moestl D."/>
            <person name="Hilbert H."/>
            <person name="Borzym K."/>
            <person name="Langer I."/>
            <person name="Beck A."/>
            <person name="Lehrach H."/>
            <person name="Reinhardt R."/>
            <person name="Pohl T.M."/>
            <person name="Eger P."/>
            <person name="Zimmermann W."/>
            <person name="Wedler H."/>
            <person name="Wambutt R."/>
            <person name="Purnelle B."/>
            <person name="Goffeau A."/>
            <person name="Cadieu E."/>
            <person name="Dreano S."/>
            <person name="Gloux S."/>
            <person name="Lelaure V."/>
            <person name="Mottier S."/>
            <person name="Galibert F."/>
            <person name="Aves S.J."/>
            <person name="Xiang Z."/>
            <person name="Hunt C."/>
            <person name="Moore K."/>
            <person name="Hurst S.M."/>
            <person name="Lucas M."/>
            <person name="Rochet M."/>
            <person name="Gaillardin C."/>
            <person name="Tallada V.A."/>
            <person name="Garzon A."/>
            <person name="Thode G."/>
            <person name="Daga R.R."/>
            <person name="Cruzado L."/>
            <person name="Jimenez J."/>
            <person name="Sanchez M."/>
            <person name="del Rey F."/>
            <person name="Benito J."/>
            <person name="Dominguez A."/>
            <person name="Revuelta J.L."/>
            <person name="Moreno S."/>
            <person name="Armstrong J."/>
            <person name="Forsburg S.L."/>
            <person name="Cerutti L."/>
            <person name="Lowe T."/>
            <person name="McCombie W.R."/>
            <person name="Paulsen I."/>
            <person name="Potashkin J."/>
            <person name="Shpakovski G.V."/>
            <person name="Ussery D."/>
            <person name="Barrell B.G."/>
            <person name="Nurse P."/>
        </authorList>
    </citation>
    <scope>NUCLEOTIDE SEQUENCE [LARGE SCALE GENOMIC DNA]</scope>
    <source>
        <strain>972 / ATCC 24843</strain>
    </source>
</reference>
<reference key="3">
    <citation type="submission" date="2004-05" db="EMBL/GenBank/DDBJ databases">
        <authorList>
            <person name="Seeger K."/>
            <person name="Harris D."/>
            <person name="Lyne M."/>
            <person name="Rajandream M.A."/>
            <person name="Barrell B.G."/>
        </authorList>
    </citation>
    <scope>SEQUENCE REVISION</scope>
</reference>
<reference key="4">
    <citation type="journal article" date="1998" name="Biochim. Biophys. Acta">
        <title>Schizosaccharomyces pombe apn1 encodes a homologue of the Escherichia coli endonuclease IV family of DNA repair proteins.</title>
        <authorList>
            <person name="Ramotar D."/>
            <person name="Vadnais J."/>
            <person name="Masson J.Y."/>
            <person name="Tremblay S."/>
        </authorList>
    </citation>
    <scope>NUCLEOTIDE SEQUENCE [MRNA] OF 1-319</scope>
</reference>
<reference key="5">
    <citation type="journal article" date="2011" name="DNA Repair">
        <title>Schizosaccharomyces pombe encodes a mutated AP endonuclease 1.</title>
        <authorList>
            <person name="Laerdahl J.K."/>
            <person name="Korvald H."/>
            <person name="Nilsen L."/>
            <person name="Dahl-Michelsen K."/>
            <person name="Rognes T."/>
            <person name="Bjoras M."/>
            <person name="Alseth I."/>
        </authorList>
    </citation>
    <scope>LACK OF FUNCTION</scope>
</reference>
<comment type="function">
    <text evidence="3">DNA repair enzyme that cleaves apurinic/apyrimidinic (AP) sites and removes 3'-blocking groups present at single strand breaks of damaged DNA. Provides back-up AP endonuclease (APE) activity to apn2 together with uve1.</text>
</comment>
<comment type="cofactor">
    <cofactor evidence="1">
        <name>Zn(2+)</name>
        <dbReference type="ChEBI" id="CHEBI:29105"/>
    </cofactor>
    <text evidence="1">Binds 3 Zn(2+) ions.</text>
</comment>
<comment type="subcellular location">
    <subcellularLocation>
        <location evidence="1">Nucleus</location>
    </subcellularLocation>
</comment>
<comment type="similarity">
    <text evidence="4">Belongs to the AP endonuclease 2 family.</text>
</comment>
<comment type="caution">
    <text evidence="5">Could be the product of a pseudogene. This is a truncated version of AP endonuclease 1. In strain 972 and its derivative FY527, this gene has a stop codon in position 5, which disrupts the gene coding for this protein. PubMed:21193357 shows that the truncated protein is not functional. A full sequence for apn1 can be found in strains SPK19802 (S.pombe var. kambucha), NCYC 132, NCYC 683, NCYC 936 and NCYC 2722 (PubMed:21193357).</text>
</comment>
<comment type="sequence caution" evidence="4">
    <conflict type="frameshift">
        <sequence resource="EMBL-CDS" id="AAC28163"/>
    </conflict>
</comment>
<comment type="sequence caution" evidence="4">
    <conflict type="miscellaneous discrepancy">
        <sequence resource="EMBL-CDS" id="AAC28163"/>
    </conflict>
    <text>Intron retention.</text>
</comment>
<gene>
    <name type="primary">apn1</name>
    <name type="ORF">SPCC622.17</name>
</gene>
<protein>
    <recommendedName>
        <fullName>Apurinic-apyrimidinic endonuclease 1</fullName>
        <shortName>AP endonuclease 1</shortName>
        <ecNumber>3.1.21.-</ecNumber>
    </recommendedName>
</protein>
<keyword id="KW-0227">DNA damage</keyword>
<keyword id="KW-0234">DNA repair</keyword>
<keyword id="KW-0378">Hydrolase</keyword>
<keyword id="KW-0479">Metal-binding</keyword>
<keyword id="KW-0539">Nucleus</keyword>
<keyword id="KW-1185">Reference proteome</keyword>
<keyword id="KW-0862">Zinc</keyword>
<feature type="chain" id="PRO_0000190897" description="Apurinic-apyrimidinic endonuclease 1">
    <location>
        <begin position="1"/>
        <end position="342"/>
    </location>
</feature>
<feature type="region of interest" description="Disordered" evidence="2">
    <location>
        <begin position="299"/>
        <end position="342"/>
    </location>
</feature>
<feature type="compositionally biased region" description="Basic and acidic residues" evidence="2">
    <location>
        <begin position="299"/>
        <end position="310"/>
    </location>
</feature>
<feature type="binding site" evidence="1">
    <location>
        <position position="61"/>
    </location>
    <ligand>
        <name>Zn(2+)</name>
        <dbReference type="ChEBI" id="CHEBI:29105"/>
        <label>1</label>
    </ligand>
</feature>
<feature type="binding site" evidence="1">
    <location>
        <position position="136"/>
    </location>
    <ligand>
        <name>Zn(2+)</name>
        <dbReference type="ChEBI" id="CHEBI:29105"/>
        <label>1</label>
    </ligand>
</feature>
<feature type="binding site" evidence="1">
    <location>
        <position position="136"/>
    </location>
    <ligand>
        <name>Zn(2+)</name>
        <dbReference type="ChEBI" id="CHEBI:29105"/>
        <label>2</label>
    </ligand>
</feature>
<feature type="binding site" evidence="1">
    <location>
        <position position="170"/>
    </location>
    <ligand>
        <name>Zn(2+)</name>
        <dbReference type="ChEBI" id="CHEBI:29105"/>
        <label>2</label>
    </ligand>
</feature>
<feature type="binding site" evidence="1">
    <location>
        <position position="173"/>
    </location>
    <ligand>
        <name>Zn(2+)</name>
        <dbReference type="ChEBI" id="CHEBI:29105"/>
        <label>3</label>
    </ligand>
</feature>
<feature type="binding site" evidence="1">
    <location>
        <position position="207"/>
    </location>
    <ligand>
        <name>Zn(2+)</name>
        <dbReference type="ChEBI" id="CHEBI:29105"/>
        <label>2</label>
    </ligand>
</feature>
<feature type="binding site" evidence="1">
    <location>
        <position position="220"/>
    </location>
    <ligand>
        <name>Zn(2+)</name>
        <dbReference type="ChEBI" id="CHEBI:29105"/>
        <label>3</label>
    </ligand>
</feature>
<feature type="binding site" evidence="1">
    <location>
        <position position="222"/>
    </location>
    <ligand>
        <name>Zn(2+)</name>
        <dbReference type="ChEBI" id="CHEBI:29105"/>
        <label>3</label>
    </ligand>
</feature>
<feature type="binding site" evidence="1">
    <location>
        <position position="252"/>
    </location>
    <ligand>
        <name>Zn(2+)</name>
        <dbReference type="ChEBI" id="CHEBI:29105"/>
        <label>2</label>
    </ligand>
</feature>
<accession>P50525</accession>
<accession>Q9USI8</accession>
<evidence type="ECO:0000250" key="1"/>
<evidence type="ECO:0000256" key="2">
    <source>
        <dbReference type="SAM" id="MobiDB-lite"/>
    </source>
</evidence>
<evidence type="ECO:0000269" key="3">
    <source>
    </source>
</evidence>
<evidence type="ECO:0000305" key="4"/>
<evidence type="ECO:0000305" key="5">
    <source>
    </source>
</evidence>
<name>APN1_SCHPO</name>
<dbReference type="EC" id="3.1.21.-"/>
<dbReference type="EMBL" id="AY483157">
    <property type="protein sequence ID" value="AAR83751.1"/>
    <property type="molecule type" value="mRNA"/>
</dbReference>
<dbReference type="EMBL" id="CU329672">
    <property type="status" value="NOT_ANNOTATED_CDS"/>
    <property type="molecule type" value="Genomic_DNA"/>
</dbReference>
<dbReference type="EMBL" id="U33625">
    <property type="protein sequence ID" value="AAC28163.1"/>
    <property type="status" value="ALT_SEQ"/>
    <property type="molecule type" value="mRNA"/>
</dbReference>
<dbReference type="PIR" id="T52563">
    <property type="entry name" value="T52563"/>
</dbReference>
<dbReference type="SMR" id="P50525"/>
<dbReference type="FunCoup" id="P50525">
    <property type="interactions" value="561"/>
</dbReference>
<dbReference type="STRING" id="284812.P50525"/>
<dbReference type="PomBase" id="SPCC622.17">
    <property type="gene designation" value="apn1"/>
</dbReference>
<dbReference type="InParanoid" id="P50525"/>
<dbReference type="PhylomeDB" id="P50525"/>
<dbReference type="BRENDA" id="4.2.99.18">
    <property type="organism ID" value="5613"/>
</dbReference>
<dbReference type="Proteomes" id="UP000002485">
    <property type="component" value="Chromosome III"/>
</dbReference>
<dbReference type="GO" id="GO:0005737">
    <property type="term" value="C:cytoplasm"/>
    <property type="evidence" value="ECO:0000314"/>
    <property type="project" value="PomBase"/>
</dbReference>
<dbReference type="GO" id="GO:0005829">
    <property type="term" value="C:cytosol"/>
    <property type="evidence" value="ECO:0007005"/>
    <property type="project" value="PomBase"/>
</dbReference>
<dbReference type="GO" id="GO:0005739">
    <property type="term" value="C:mitochondrion"/>
    <property type="evidence" value="ECO:0000318"/>
    <property type="project" value="GO_Central"/>
</dbReference>
<dbReference type="GO" id="GO:0005634">
    <property type="term" value="C:nucleus"/>
    <property type="evidence" value="ECO:0000314"/>
    <property type="project" value="PomBase"/>
</dbReference>
<dbReference type="GO" id="GO:0003677">
    <property type="term" value="F:DNA binding"/>
    <property type="evidence" value="ECO:0007669"/>
    <property type="project" value="InterPro"/>
</dbReference>
<dbReference type="GO" id="GO:0003906">
    <property type="term" value="F:DNA-(apurinic or apyrimidinic site) endonuclease activity"/>
    <property type="evidence" value="ECO:0000318"/>
    <property type="project" value="GO_Central"/>
</dbReference>
<dbReference type="GO" id="GO:0008081">
    <property type="term" value="F:phosphoric diester hydrolase activity"/>
    <property type="evidence" value="ECO:0000318"/>
    <property type="project" value="GO_Central"/>
</dbReference>
<dbReference type="GO" id="GO:0008270">
    <property type="term" value="F:zinc ion binding"/>
    <property type="evidence" value="ECO:0007669"/>
    <property type="project" value="InterPro"/>
</dbReference>
<dbReference type="GO" id="GO:0006284">
    <property type="term" value="P:base-excision repair"/>
    <property type="evidence" value="ECO:0000318"/>
    <property type="project" value="GO_Central"/>
</dbReference>
<dbReference type="CDD" id="cd00019">
    <property type="entry name" value="AP2Ec"/>
    <property type="match status" value="1"/>
</dbReference>
<dbReference type="FunFam" id="3.20.20.150:FF:000001">
    <property type="entry name" value="Probable endonuclease 4"/>
    <property type="match status" value="1"/>
</dbReference>
<dbReference type="Gene3D" id="3.20.20.150">
    <property type="entry name" value="Divalent-metal-dependent TIM barrel enzymes"/>
    <property type="match status" value="1"/>
</dbReference>
<dbReference type="HAMAP" id="MF_00152">
    <property type="entry name" value="Nfo"/>
    <property type="match status" value="1"/>
</dbReference>
<dbReference type="InterPro" id="IPR001719">
    <property type="entry name" value="AP_endonuc_2"/>
</dbReference>
<dbReference type="InterPro" id="IPR018246">
    <property type="entry name" value="AP_endonuc_F2_Zn_BS"/>
</dbReference>
<dbReference type="InterPro" id="IPR036237">
    <property type="entry name" value="Xyl_isomerase-like_sf"/>
</dbReference>
<dbReference type="InterPro" id="IPR013022">
    <property type="entry name" value="Xyl_isomerase-like_TIM-brl"/>
</dbReference>
<dbReference type="NCBIfam" id="TIGR00587">
    <property type="entry name" value="nfo"/>
    <property type="match status" value="1"/>
</dbReference>
<dbReference type="PANTHER" id="PTHR21445:SF0">
    <property type="entry name" value="APURINIC-APYRIMIDINIC ENDONUCLEASE"/>
    <property type="match status" value="1"/>
</dbReference>
<dbReference type="PANTHER" id="PTHR21445">
    <property type="entry name" value="ENDONUCLEASE IV ENDODEOXYRIBONUCLEASE IV"/>
    <property type="match status" value="1"/>
</dbReference>
<dbReference type="Pfam" id="PF01261">
    <property type="entry name" value="AP_endonuc_2"/>
    <property type="match status" value="1"/>
</dbReference>
<dbReference type="SMART" id="SM00518">
    <property type="entry name" value="AP2Ec"/>
    <property type="match status" value="1"/>
</dbReference>
<dbReference type="SUPFAM" id="SSF51658">
    <property type="entry name" value="Xylose isomerase-like"/>
    <property type="match status" value="1"/>
</dbReference>
<dbReference type="PROSITE" id="PS00729">
    <property type="entry name" value="AP_NUCLEASE_F2_1"/>
    <property type="match status" value="1"/>
</dbReference>
<dbReference type="PROSITE" id="PS00730">
    <property type="entry name" value="AP_NUCLEASE_F2_2"/>
    <property type="match status" value="1"/>
</dbReference>
<dbReference type="PROSITE" id="PS00731">
    <property type="entry name" value="AP_NUCLEASE_F2_3"/>
    <property type="match status" value="1"/>
</dbReference>
<dbReference type="PROSITE" id="PS51432">
    <property type="entry name" value="AP_NUCLEASE_F2_4"/>
    <property type="match status" value="1"/>
</dbReference>
<sequence length="342" mass="38657">MCAINKAYLLTKFYISANSCAFFVKSQRKWTSPDLSEDVAQKFLETASEMKFDASKQVLVHGSYLINMANADEQKREQAFNCFVDDLKRCERLGVGLYNFHPGSTASCTKEEGINNLAECINRAHEETKSVIIVTENMAGQGNCLGGTFDDFAALKSKIKNLDRWRVCLDTCHTFAAGYDIRTEESYKKVIDEFDEKVGAKYVSGWHLNDSKAPLGSNRDLHENIGLGFLGLEPFRLIMNDSRWDGIPLVLETPAKSPEQWKKEVELLRFMVGKSSDDVELMKESARLSNLGAASRKEHLNKFEKKEAKKDRKKKSKDGDQTTLLLRKKQKLGNAEVKSLDE</sequence>